<geneLocation type="chloroplast" evidence="4"/>
<name>PHEA1_HEMAN</name>
<keyword id="KW-0002">3D-structure</keyword>
<keyword id="KW-0089">Bile pigment</keyword>
<keyword id="KW-0150">Chloroplast</keyword>
<keyword id="KW-0157">Chromophore</keyword>
<keyword id="KW-0249">Electron transport</keyword>
<keyword id="KW-0472">Membrane</keyword>
<keyword id="KW-0602">Photosynthesis</keyword>
<keyword id="KW-0934">Plastid</keyword>
<keyword id="KW-0793">Thylakoid</keyword>
<keyword id="KW-0813">Transport</keyword>
<comment type="function">
    <text evidence="3">Light-harvesting photosynthetic tetrapyrrole chromophore-protein from the phycobiliprotein complex.</text>
</comment>
<comment type="subunit">
    <text evidence="1">Heterotetramer of 2 different alpha chains and 2 identical beta chains which form 2 alpha-beta heterodimers within the heterotetramer. The two alpha-beta heterodimers are rotated to an open configuration in contrast to the closed configuration found in other cryptophyte species due to the insertion of a single amino acid, Asp-65, in a conserved region of the alpha chain. In the open form, the central chromophores are not in physical contact but are separated by a water-filled channel.</text>
</comment>
<comment type="subcellular location">
    <subcellularLocation>
        <location evidence="3">Plastid</location>
        <location evidence="3">Chloroplast thylakoid membrane</location>
        <topology evidence="3">Peripheral membrane protein</topology>
        <orientation evidence="3">Lumenal side</orientation>
    </subcellularLocation>
</comment>
<comment type="PTM">
    <text evidence="1">Contains three phycoerythrobilin chromophores with binding mediated by both the alpha and beta subunits.</text>
</comment>
<comment type="miscellaneous">
    <text evidence="3">The light-harvesting system in Cryptophytes contains phycobiliprotein complexes. Unusually they are composed of either phycoerythrin (CPE) or phycocyanin (CPC) but never allophycocyanin (APC), with only one type of biliprotein being present in any one species. Unlike cyanobacteria or red algae these proteins are not arranged into higher-order phycobilisome complexes, and they are found in the thylakoid lumen.</text>
</comment>
<comment type="similarity">
    <text evidence="3">Belongs to the phycoerythrin family.</text>
</comment>
<dbReference type="EMBL" id="KF314696">
    <property type="protein sequence ID" value="AGY96993.1"/>
    <property type="molecule type" value="mRNA"/>
</dbReference>
<dbReference type="PDB" id="4LMX">
    <property type="method" value="X-ray"/>
    <property type="resolution" value="1.80 A"/>
    <property type="chains" value="C=48-114"/>
</dbReference>
<dbReference type="PDB" id="8EL3">
    <property type="method" value="X-ray"/>
    <property type="resolution" value="1.57 A"/>
    <property type="chains" value="A/G/J/K=48-114"/>
</dbReference>
<dbReference type="PDB" id="8EL4">
    <property type="method" value="X-ray"/>
    <property type="resolution" value="1.73 A"/>
    <property type="chains" value="A/F=48-114"/>
</dbReference>
<dbReference type="PDB" id="8EL5">
    <property type="method" value="X-ray"/>
    <property type="resolution" value="1.67 A"/>
    <property type="chains" value="A/G/J/K=48-114"/>
</dbReference>
<dbReference type="PDB" id="8EL6">
    <property type="method" value="X-ray"/>
    <property type="resolution" value="1.95 A"/>
    <property type="chains" value="A/F=48-114"/>
</dbReference>
<dbReference type="PDBsum" id="4LMX"/>
<dbReference type="PDBsum" id="8EL3"/>
<dbReference type="PDBsum" id="8EL4"/>
<dbReference type="PDBsum" id="8EL5"/>
<dbReference type="PDBsum" id="8EL6"/>
<dbReference type="SMR" id="U5TBU5"/>
<dbReference type="GO" id="GO:0009535">
    <property type="term" value="C:chloroplast thylakoid membrane"/>
    <property type="evidence" value="ECO:0007669"/>
    <property type="project" value="UniProtKB-SubCell"/>
</dbReference>
<dbReference type="GO" id="GO:0030089">
    <property type="term" value="C:phycobilisome"/>
    <property type="evidence" value="ECO:0007669"/>
    <property type="project" value="InterPro"/>
</dbReference>
<dbReference type="GO" id="GO:0015979">
    <property type="term" value="P:photosynthesis"/>
    <property type="evidence" value="ECO:0007669"/>
    <property type="project" value="UniProtKB-KW"/>
</dbReference>
<dbReference type="Gene3D" id="3.90.510.10">
    <property type="entry name" value="Phycoerythrin alpha chain"/>
    <property type="match status" value="1"/>
</dbReference>
<dbReference type="InterPro" id="IPR011070">
    <property type="entry name" value="Globular_prot_asu/bsu"/>
</dbReference>
<dbReference type="InterPro" id="IPR037011">
    <property type="entry name" value="Phycoerythr-like_a_sf"/>
</dbReference>
<dbReference type="InterPro" id="IPR004228">
    <property type="entry name" value="Phycoerythr_a"/>
</dbReference>
<dbReference type="Pfam" id="PF02972">
    <property type="entry name" value="Phycoerythr_ab"/>
    <property type="match status" value="1"/>
</dbReference>
<dbReference type="SUPFAM" id="SSF56568">
    <property type="entry name" value="Non-globular alpha+beta subunits of globular proteins"/>
    <property type="match status" value="1"/>
</dbReference>
<reference evidence="4 5" key="1">
    <citation type="journal article" date="2014" name="Proc. Natl. Acad. Sci. U.S.A.">
        <title>Single-residue insertion switches the quaternary structure and exciton states of cryptophyte light-harvesting proteins.</title>
        <authorList>
            <person name="Harrop S.J."/>
            <person name="Wilk K.E."/>
            <person name="Dinshaw R."/>
            <person name="Collini E."/>
            <person name="Mirkovic T."/>
            <person name="Teng C.Y."/>
            <person name="Oblinsky D.G."/>
            <person name="Green B.R."/>
            <person name="Hoef-Emden K."/>
            <person name="Hiller R.G."/>
            <person name="Scholes G.D."/>
            <person name="Curmi P.M."/>
        </authorList>
    </citation>
    <scope>NUCLEOTIDE SEQUENCE [MRNA]</scope>
    <scope>X-RAY CRYSTALLOGRAPHY (1.80 ANGSTROMS) OF 48-114 IN COMPLEX WITH PHYCOERYTHROBILIN</scope>
    <scope>SUBUNIT</scope>
    <source>
        <strain evidence="4">CCMP644</strain>
    </source>
</reference>
<evidence type="ECO:0000269" key="1">
    <source>
    </source>
</evidence>
<evidence type="ECO:0000303" key="2">
    <source>
    </source>
</evidence>
<evidence type="ECO:0000305" key="3"/>
<evidence type="ECO:0000312" key="4">
    <source>
        <dbReference type="EMBL" id="AGY96993.1"/>
    </source>
</evidence>
<evidence type="ECO:0007744" key="5">
    <source>
        <dbReference type="PDB" id="4LMX"/>
    </source>
</evidence>
<evidence type="ECO:0007829" key="6">
    <source>
        <dbReference type="PDB" id="8EL3"/>
    </source>
</evidence>
<sequence>MYTKIALLGLVGSAAAFNAPMMTVRRDAIATGAAAAVVAPMLRPAGAAMKKDSKAPCVEVFDERDGCKAAGTQKASGDDGFCVKVSMKAIGFNAAEAASVTKNYGIKRFGAKSV</sequence>
<protein>
    <recommendedName>
        <fullName evidence="3">Phycoerythrin alpha-1 subunit</fullName>
    </recommendedName>
    <alternativeName>
        <fullName evidence="3">Phycoerythrin PE555 alpha-1 subunit</fullName>
        <shortName evidence="2">PE555A-1</shortName>
    </alternativeName>
</protein>
<organism evidence="4">
    <name type="scientific">Hemiselmis andersenii</name>
    <name type="common">Cryptophyte alga</name>
    <dbReference type="NCBI Taxonomy" id="464988"/>
    <lineage>
        <taxon>Eukaryota</taxon>
        <taxon>Cryptophyceae</taxon>
        <taxon>Cryptomonadales</taxon>
        <taxon>Hemiselmidaceae</taxon>
        <taxon>Hemiselmis</taxon>
    </lineage>
</organism>
<accession>U5TBU5</accession>
<feature type="chain" id="PRO_5004664522" description="Phycoerythrin alpha-1 subunit">
    <location>
        <begin position="1"/>
        <end position="114"/>
    </location>
</feature>
<feature type="binding site" evidence="1 5">
    <location>
        <position position="52"/>
    </location>
    <ligand>
        <name>(2R,3E)-phycoerythrobilin</name>
        <dbReference type="ChEBI" id="CHEBI:85276"/>
        <label>1</label>
        <note>ligand shared with beta subunit</note>
    </ligand>
</feature>
<feature type="binding site" evidence="1 5">
    <location>
        <position position="53"/>
    </location>
    <ligand>
        <name>(2R,3E)-phycoerythrobilin</name>
        <dbReference type="ChEBI" id="CHEBI:85276"/>
        <label>1</label>
        <note>ligand shared with beta subunit</note>
    </ligand>
</feature>
<feature type="binding site" evidence="1 5">
    <location>
        <position position="63"/>
    </location>
    <ligand>
        <name>(2R,3E)-phycoerythrobilin</name>
        <dbReference type="ChEBI" id="CHEBI:85276"/>
        <label>2</label>
        <note>ligand shared with beta subunit</note>
    </ligand>
</feature>
<feature type="binding site" evidence="1 5">
    <location>
        <position position="64"/>
    </location>
    <ligand>
        <name>(2R,3E)-phycoerythrobilin</name>
        <dbReference type="ChEBI" id="CHEBI:85276"/>
        <label>3</label>
        <note>ligand shared with beta subunit</note>
    </ligand>
</feature>
<feature type="binding site" description="covalent" evidence="1 5">
    <location>
        <position position="67"/>
    </location>
    <ligand>
        <name>(2R,3E)-phycoerythrobilin</name>
        <dbReference type="ChEBI" id="CHEBI:85276"/>
        <label>2</label>
        <note>ligand shared with beta subunit</note>
    </ligand>
</feature>
<feature type="binding site" evidence="1 5">
    <location>
        <position position="72"/>
    </location>
    <ligand>
        <name>(2R,3E)-phycoerythrobilin</name>
        <dbReference type="ChEBI" id="CHEBI:85276"/>
        <label>2</label>
        <note>ligand shared with beta subunit</note>
    </ligand>
</feature>
<feature type="binding site" evidence="1 5">
    <location>
        <position position="74"/>
    </location>
    <ligand>
        <name>(2R,3E)-phycoerythrobilin</name>
        <dbReference type="ChEBI" id="CHEBI:85276"/>
        <label>2</label>
        <note>ligand shared with beta subunit</note>
    </ligand>
</feature>
<feature type="binding site" evidence="1 5">
    <location>
        <position position="75"/>
    </location>
    <ligand>
        <name>(2R,3E)-phycoerythrobilin</name>
        <dbReference type="ChEBI" id="CHEBI:85276"/>
        <label>2</label>
        <note>ligand shared with beta subunit</note>
    </ligand>
</feature>
<feature type="binding site" evidence="1 5">
    <location>
        <position position="84"/>
    </location>
    <ligand>
        <name>(2R,3E)-phycoerythrobilin</name>
        <dbReference type="ChEBI" id="CHEBI:85276"/>
        <label>2</label>
        <note>ligand shared with beta subunit</note>
    </ligand>
</feature>
<feature type="strand" evidence="6">
    <location>
        <begin position="49"/>
        <end position="55"/>
    </location>
</feature>
<feature type="strand" evidence="6">
    <location>
        <begin position="57"/>
        <end position="93"/>
    </location>
</feature>
<feature type="helix" evidence="6">
    <location>
        <begin position="94"/>
        <end position="103"/>
    </location>
</feature>
<feature type="strand" evidence="6">
    <location>
        <begin position="104"/>
        <end position="109"/>
    </location>
</feature>
<proteinExistence type="evidence at protein level"/>